<proteinExistence type="evidence at protein level"/>
<reference key="1">
    <citation type="journal article" date="2010" name="Science">
        <title>Genomic comparison of the ants Camponotus floridanus and Harpegnathos saltator.</title>
        <authorList>
            <person name="Bonasio R."/>
            <person name="Zhang G."/>
            <person name="Ye C."/>
            <person name="Mutti N.S."/>
            <person name="Fang X."/>
            <person name="Qin N."/>
            <person name="Donahue G."/>
            <person name="Yang P."/>
            <person name="Li Q."/>
            <person name="Li C."/>
            <person name="Zhang P."/>
            <person name="Huang Z."/>
            <person name="Berger S.L."/>
            <person name="Reinberg D."/>
            <person name="Wang J."/>
            <person name="Liebig J."/>
        </authorList>
    </citation>
    <scope>NUCLEOTIDE SEQUENCE [LARGE SCALE GENOMIC DNA]</scope>
</reference>
<reference evidence="5" key="2">
    <citation type="journal article" date="2015" name="J. Proteome Res.">
        <title>Neuropeptidomics of the carpenter ant Camponotus floridanus.</title>
        <authorList>
            <person name="Schmitt F."/>
            <person name="Vanselow J.T."/>
            <person name="Schlosser A."/>
            <person name="Kahnt J."/>
            <person name="Roessler W."/>
            <person name="Wegener C."/>
        </authorList>
    </citation>
    <scope>PROTEIN SEQUENCE OF 119-127; 148-156; 170-178; 238-246; 262-270; 294-302; 311-319; 361-369 AND 373-386</scope>
    <scope>TISSUE SPECIFICITY</scope>
    <scope>MASS SPECTROMETRY</scope>
    <scope>IDENTIFICATION BY MASS SPECTROMETRY</scope>
    <scope>AMIDATION AT ARG-127; ARG-156; ARG-178; ARG-246; ARG-270; ARG-302; ARG-319; ARG-369 AND ARG-386</scope>
</reference>
<evidence type="ECO:0000250" key="1">
    <source>
        <dbReference type="UniProtKB" id="Q868G6"/>
    </source>
</evidence>
<evidence type="ECO:0000256" key="2">
    <source>
        <dbReference type="SAM" id="MobiDB-lite"/>
    </source>
</evidence>
<evidence type="ECO:0000269" key="3">
    <source>
    </source>
</evidence>
<evidence type="ECO:0000303" key="4">
    <source>
    </source>
</evidence>
<evidence type="ECO:0000305" key="5"/>
<evidence type="ECO:0000305" key="6">
    <source>
    </source>
</evidence>
<evidence type="ECO:0000312" key="7">
    <source>
        <dbReference type="EMBL" id="EFN66667.1"/>
    </source>
</evidence>
<dbReference type="EMBL" id="GL439874">
    <property type="protein sequence ID" value="EFN66667.1"/>
    <property type="molecule type" value="Genomic_DNA"/>
</dbReference>
<dbReference type="STRING" id="104421.E2AIS8"/>
<dbReference type="EnsemblMetazoa" id="XM_011260488.3">
    <property type="protein sequence ID" value="XP_011258790.1"/>
    <property type="gene ID" value="LOC105252866"/>
</dbReference>
<dbReference type="OMA" id="FEKRAPM"/>
<dbReference type="OrthoDB" id="5919137at2759"/>
<dbReference type="Proteomes" id="UP000000311">
    <property type="component" value="Unassembled WGS sequence"/>
</dbReference>
<dbReference type="GO" id="GO:0005576">
    <property type="term" value="C:extracellular region"/>
    <property type="evidence" value="ECO:0007669"/>
    <property type="project" value="UniProtKB-SubCell"/>
</dbReference>
<dbReference type="GO" id="GO:0007218">
    <property type="term" value="P:neuropeptide signaling pathway"/>
    <property type="evidence" value="ECO:0007669"/>
    <property type="project" value="UniProtKB-KW"/>
</dbReference>
<gene>
    <name evidence="7" type="ORF">EAG_05065</name>
</gene>
<name>TACHY_CAMFO</name>
<comment type="function">
    <text evidence="1">Tachykinins are active peptides which excite neurons, evoke behavioral responses, are potent vasodilators and secretagogues, and contract (directly or indirectly) many smooth muscles.</text>
</comment>
<comment type="subcellular location">
    <subcellularLocation>
        <location evidence="6">Secreted</location>
    </subcellularLocation>
</comment>
<comment type="tissue specificity">
    <text evidence="3">Tachykinins (TK) are expressed throughout the nervous system. APMGFQGMR-amide is also expressed in the retrocerebral complex (at protein level).</text>
</comment>
<comment type="mass spectrometry">
    <molecule>APMGFQGMR-amide</molecule>
    <text>APMGFQGMR-amide.</text>
</comment>
<comment type="mass spectrometry">
    <molecule>TIMGFQGMR-amide</molecule>
    <text>TIMGFQGMR-amide.</text>
</comment>
<comment type="mass spectrometry">
    <molecule>SPFRYFEMR-amide</molecule>
    <text>SPFRYFEMR-amide.</text>
</comment>
<comment type="mass spectrometry">
    <molecule>NPRWELRGMFVGVR-amide</molecule>
    <text>NPRWELRGMFVGVR-amide.</text>
</comment>
<comment type="similarity">
    <text evidence="5">Belongs to the tachykinin family.</text>
</comment>
<organism>
    <name type="scientific">Camponotus floridanus</name>
    <name type="common">Florida carpenter ant</name>
    <dbReference type="NCBI Taxonomy" id="104421"/>
    <lineage>
        <taxon>Eukaryota</taxon>
        <taxon>Metazoa</taxon>
        <taxon>Ecdysozoa</taxon>
        <taxon>Arthropoda</taxon>
        <taxon>Hexapoda</taxon>
        <taxon>Insecta</taxon>
        <taxon>Pterygota</taxon>
        <taxon>Neoptera</taxon>
        <taxon>Endopterygota</taxon>
        <taxon>Hymenoptera</taxon>
        <taxon>Apocrita</taxon>
        <taxon>Aculeata</taxon>
        <taxon>Formicoidea</taxon>
        <taxon>Formicidae</taxon>
        <taxon>Formicinae</taxon>
        <taxon>Camponotus</taxon>
    </lineage>
</organism>
<sequence>MQCDFRVHQDARLARVYYFTEVWWMFIFKFLEPKMLINSVLFLAIWSSSFAEESSSSDATSNKRAAMGFQDMRGNKNLIPTSLEHNKLSKRTLMDFQDNKDSNAPDIEDNLSHEFEKRAPMGFQGMRGKKGYLTPDFEDSYFRDEKRAPMGFQGMRGKKVVSDDDYYKRAPMGFQGMRGKKSLEEVLGEIEKKAAMDYYDTRDKKTYVFEYPEDYEKRLLASIRGKLKEFPMEWEKRAPMGFQGMRGKKSLLDEIEELEKRTIMGFQGMRGKKNALENYIDYYLDPDMDFDKRAPMGFQGMRGKKDSDKRAPMGFQGMRGKRNTGQRFDTGINFNIRSSNEYQGTNNRRNALASCQLEKRSPFRYFEMRGKKNPRWELRGMFVGVRGKKWATAPYEDDSPFISVFDNTERIGVDGDSPAILGNSIS</sequence>
<feature type="propeptide" id="PRO_0000434164" evidence="6">
    <location>
        <begin position="1"/>
        <end position="116"/>
    </location>
</feature>
<feature type="peptide" id="PRO_0000434165" description="APMGFQGMR-amide" evidence="3">
    <location>
        <begin position="119"/>
        <end position="127"/>
    </location>
</feature>
<feature type="propeptide" id="PRO_0000434166" evidence="6">
    <location>
        <begin position="131"/>
        <end position="145"/>
    </location>
</feature>
<feature type="peptide" id="PRO_0000434167" description="APMGFQGMR-amide" evidence="3">
    <location>
        <begin position="148"/>
        <end position="156"/>
    </location>
</feature>
<feature type="propeptide" id="PRO_0000434168" evidence="6">
    <location>
        <begin position="160"/>
        <end position="167"/>
    </location>
</feature>
<feature type="peptide" id="PRO_0000434169" description="APMGFQGMR-amide" evidence="3">
    <location>
        <begin position="170"/>
        <end position="178"/>
    </location>
</feature>
<feature type="propeptide" id="PRO_0000434170" evidence="6">
    <location>
        <begin position="182"/>
        <end position="235"/>
    </location>
</feature>
<feature type="peptide" id="PRO_0000434171" description="APMGFQGMR-amide" evidence="3">
    <location>
        <begin position="238"/>
        <end position="246"/>
    </location>
</feature>
<feature type="propeptide" id="PRO_0000434172" evidence="6">
    <location>
        <begin position="250"/>
        <end position="259"/>
    </location>
</feature>
<feature type="peptide" id="PRO_0000434173" description="TIMGFQGMR-amide" evidence="3">
    <location>
        <begin position="262"/>
        <end position="270"/>
    </location>
</feature>
<feature type="propeptide" id="PRO_0000434174" evidence="6">
    <location>
        <begin position="274"/>
        <end position="291"/>
    </location>
</feature>
<feature type="peptide" id="PRO_0000434175" description="APMGFQGMR-amide" evidence="3">
    <location>
        <begin position="294"/>
        <end position="302"/>
    </location>
</feature>
<feature type="propeptide" id="PRO_0000434176" evidence="6">
    <location>
        <begin position="306"/>
        <end position="308"/>
    </location>
</feature>
<feature type="peptide" id="PRO_0000434177" description="APMGFQGMR-amide" evidence="3">
    <location>
        <begin position="311"/>
        <end position="319"/>
    </location>
</feature>
<feature type="propeptide" id="PRO_0000434178" evidence="6">
    <location>
        <begin position="323"/>
        <end position="358"/>
    </location>
</feature>
<feature type="peptide" id="PRO_0000434179" description="SPFRYFEMR-amide" evidence="3">
    <location>
        <begin position="361"/>
        <end position="369"/>
    </location>
</feature>
<feature type="peptide" id="PRO_0000434180" description="NPRWELRGMFVGVR-amide" evidence="3">
    <location>
        <begin position="373"/>
        <end position="386"/>
    </location>
</feature>
<feature type="propeptide" id="PRO_0000434181" evidence="6">
    <location>
        <begin position="390"/>
        <end position="426"/>
    </location>
</feature>
<feature type="region of interest" description="Disordered" evidence="2">
    <location>
        <begin position="299"/>
        <end position="329"/>
    </location>
</feature>
<feature type="modified residue" description="Arginine amide" evidence="3">
    <location>
        <position position="127"/>
    </location>
</feature>
<feature type="modified residue" description="Arginine amide" evidence="3">
    <location>
        <position position="156"/>
    </location>
</feature>
<feature type="modified residue" description="Arginine amide" evidence="3">
    <location>
        <position position="178"/>
    </location>
</feature>
<feature type="modified residue" description="Arginine amide" evidence="3">
    <location>
        <position position="246"/>
    </location>
</feature>
<feature type="modified residue" description="Arginine amide" evidence="3">
    <location>
        <position position="270"/>
    </location>
</feature>
<feature type="modified residue" description="Arginine amide" evidence="3">
    <location>
        <position position="302"/>
    </location>
</feature>
<feature type="modified residue" description="Arginine amide" evidence="3">
    <location>
        <position position="319"/>
    </location>
</feature>
<feature type="modified residue" description="Arginine amide" evidence="3">
    <location>
        <position position="369"/>
    </location>
</feature>
<feature type="modified residue" description="Arginine amide" evidence="3">
    <location>
        <position position="386"/>
    </location>
</feature>
<accession>E2AIS8</accession>
<protein>
    <recommendedName>
        <fullName evidence="7">Tachykinins</fullName>
    </recommendedName>
    <component>
        <recommendedName>
            <fullName evidence="5">APMGFQGMR-amide</fullName>
        </recommendedName>
        <alternativeName>
            <fullName evidence="4">Tachykinin-related peptide 1</fullName>
        </alternativeName>
    </component>
    <component>
        <recommendedName>
            <fullName evidence="5">TIMGFQGMR-amide</fullName>
        </recommendedName>
        <alternativeName>
            <fullName evidence="4">Tachykinin-related peptide 2</fullName>
        </alternativeName>
    </component>
    <component>
        <recommendedName>
            <fullName evidence="5">SPFRYFEMR-amide</fullName>
        </recommendedName>
        <alternativeName>
            <fullName evidence="4">Tachykinin-related peptide 3</fullName>
        </alternativeName>
    </component>
    <component>
        <recommendedName>
            <fullName evidence="5">NPRWELRGMFVGVR-amide</fullName>
        </recommendedName>
        <alternativeName>
            <fullName evidence="4">Tachykinin-related peptide 4</fullName>
        </alternativeName>
    </component>
</protein>
<keyword id="KW-0027">Amidation</keyword>
<keyword id="KW-0165">Cleavage on pair of basic residues</keyword>
<keyword id="KW-0903">Direct protein sequencing</keyword>
<keyword id="KW-0527">Neuropeptide</keyword>
<keyword id="KW-1185">Reference proteome</keyword>
<keyword id="KW-0964">Secreted</keyword>